<gene>
    <name evidence="1" type="primary">matK</name>
</gene>
<feature type="chain" id="PRO_0000143290" description="Maturase K">
    <location>
        <begin position="1"/>
        <end position="502"/>
    </location>
</feature>
<dbReference type="EMBL" id="AY541618">
    <property type="protein sequence ID" value="AAS48151.1"/>
    <property type="status" value="ALT_INIT"/>
    <property type="molecule type" value="Genomic_DNA"/>
</dbReference>
<dbReference type="GO" id="GO:0009507">
    <property type="term" value="C:chloroplast"/>
    <property type="evidence" value="ECO:0007669"/>
    <property type="project" value="UniProtKB-SubCell"/>
</dbReference>
<dbReference type="GO" id="GO:0003723">
    <property type="term" value="F:RNA binding"/>
    <property type="evidence" value="ECO:0007669"/>
    <property type="project" value="UniProtKB-KW"/>
</dbReference>
<dbReference type="GO" id="GO:0006397">
    <property type="term" value="P:mRNA processing"/>
    <property type="evidence" value="ECO:0007669"/>
    <property type="project" value="UniProtKB-KW"/>
</dbReference>
<dbReference type="GO" id="GO:0008380">
    <property type="term" value="P:RNA splicing"/>
    <property type="evidence" value="ECO:0007669"/>
    <property type="project" value="UniProtKB-UniRule"/>
</dbReference>
<dbReference type="GO" id="GO:0008033">
    <property type="term" value="P:tRNA processing"/>
    <property type="evidence" value="ECO:0007669"/>
    <property type="project" value="UniProtKB-KW"/>
</dbReference>
<dbReference type="HAMAP" id="MF_01390">
    <property type="entry name" value="MatK"/>
    <property type="match status" value="1"/>
</dbReference>
<dbReference type="InterPro" id="IPR024937">
    <property type="entry name" value="Domain_X"/>
</dbReference>
<dbReference type="InterPro" id="IPR002866">
    <property type="entry name" value="Maturase_MatK"/>
</dbReference>
<dbReference type="InterPro" id="IPR024942">
    <property type="entry name" value="Maturase_MatK_N"/>
</dbReference>
<dbReference type="PANTHER" id="PTHR34811">
    <property type="entry name" value="MATURASE K"/>
    <property type="match status" value="1"/>
</dbReference>
<dbReference type="PANTHER" id="PTHR34811:SF1">
    <property type="entry name" value="MATURASE K"/>
    <property type="match status" value="1"/>
</dbReference>
<dbReference type="Pfam" id="PF01348">
    <property type="entry name" value="Intron_maturas2"/>
    <property type="match status" value="1"/>
</dbReference>
<dbReference type="Pfam" id="PF01824">
    <property type="entry name" value="MatK_N"/>
    <property type="match status" value="1"/>
</dbReference>
<sequence>MEKFQGYLEFDGARQQSFLYPLFFRDYIYVLAYDHGLNRLNRNRPIFLENADYDKKYSSLIVKRLILRMYEQNRLIIPTKDLNKNLGHTNNFYYQMISVLFAVIVEIPFSLRLGSSIEGKNVKKSYNLQSLHSIFPFLEDKLSHFNYVLDVLIPYPIHLEILVQTLRYRVKDASSLHFFRFCLYEYCNWKNFDSKKKSILNPRFLLFLYNSHVCEYESIFFFLRKQSSHLRSTSYDVFFERILFYGKIQHFFKVFVNNFSALLGLLKDPFLHYVRYHGKYILATKDTPLLMNKWKYYFVNLWQCYFSVWFQSQKVNINQLSKDNLEFLGYLSSLRLNPLVVRSQLLENSFLIDNVRIKLDSNIPISSIIGSLAKDKFCNVLGHPISKATWTDSSDSDILNRFVRICRNISHYYSGSSNKKNLYRIKYILRLCCVKTLARKHKSTVRAFLKRLGSGLLEEFLTGEDQVLSLIFPRSDYASKRLYRVRVWYLDILYLNDLVNHE</sequence>
<proteinExistence type="inferred from homology"/>
<protein>
    <recommendedName>
        <fullName evidence="1">Maturase K</fullName>
    </recommendedName>
    <alternativeName>
        <fullName evidence="1">Intron maturase</fullName>
    </alternativeName>
</protein>
<reference key="1">
    <citation type="submission" date="2004-02" db="EMBL/GenBank/DDBJ databases">
        <title>Chloroplast DNA studies of wild 2n=18 Brassica oleracea relatives using PCR-RFLP and sequencing techniques.</title>
        <authorList>
            <person name="Simonetti E."/>
            <person name="Martin J.P."/>
            <person name="Gonzalez L.M."/>
            <person name="Aguinagalde I."/>
        </authorList>
    </citation>
    <scope>NUCLEOTIDE SEQUENCE [GENOMIC DNA]</scope>
</reference>
<geneLocation type="chloroplast"/>
<accession>Q6QHE0</accession>
<name>MATK_BRAOL</name>
<organism>
    <name type="scientific">Brassica oleracea</name>
    <name type="common">Wild cabbage</name>
    <dbReference type="NCBI Taxonomy" id="3712"/>
    <lineage>
        <taxon>Eukaryota</taxon>
        <taxon>Viridiplantae</taxon>
        <taxon>Streptophyta</taxon>
        <taxon>Embryophyta</taxon>
        <taxon>Tracheophyta</taxon>
        <taxon>Spermatophyta</taxon>
        <taxon>Magnoliopsida</taxon>
        <taxon>eudicotyledons</taxon>
        <taxon>Gunneridae</taxon>
        <taxon>Pentapetalae</taxon>
        <taxon>rosids</taxon>
        <taxon>malvids</taxon>
        <taxon>Brassicales</taxon>
        <taxon>Brassicaceae</taxon>
        <taxon>Brassiceae</taxon>
        <taxon>Brassica</taxon>
    </lineage>
</organism>
<evidence type="ECO:0000255" key="1">
    <source>
        <dbReference type="HAMAP-Rule" id="MF_01390"/>
    </source>
</evidence>
<evidence type="ECO:0000305" key="2"/>
<keyword id="KW-0150">Chloroplast</keyword>
<keyword id="KW-0507">mRNA processing</keyword>
<keyword id="KW-0934">Plastid</keyword>
<keyword id="KW-0694">RNA-binding</keyword>
<keyword id="KW-0819">tRNA processing</keyword>
<comment type="function">
    <text evidence="1">Usually encoded in the trnK tRNA gene intron. Probably assists in splicing its own and other chloroplast group II introns.</text>
</comment>
<comment type="subcellular location">
    <subcellularLocation>
        <location>Plastid</location>
        <location>Chloroplast</location>
    </subcellularLocation>
</comment>
<comment type="similarity">
    <text evidence="1">Belongs to the intron maturase 2 family. MatK subfamily.</text>
</comment>
<comment type="sequence caution" evidence="2">
    <conflict type="erroneous initiation">
        <sequence resource="EMBL-CDS" id="AAS48151"/>
    </conflict>
</comment>